<protein>
    <recommendedName>
        <fullName evidence="1">Small ribosomal subunit protein bS6</fullName>
    </recommendedName>
    <alternativeName>
        <fullName evidence="2">30S ribosomal protein S6</fullName>
    </alternativeName>
</protein>
<organism>
    <name type="scientific">Sulfurimonas denitrificans (strain ATCC 33889 / DSM 1251)</name>
    <name type="common">Thiomicrospira denitrificans (strain ATCC 33889 / DSM 1251)</name>
    <dbReference type="NCBI Taxonomy" id="326298"/>
    <lineage>
        <taxon>Bacteria</taxon>
        <taxon>Pseudomonadati</taxon>
        <taxon>Campylobacterota</taxon>
        <taxon>Epsilonproteobacteria</taxon>
        <taxon>Campylobacterales</taxon>
        <taxon>Sulfurimonadaceae</taxon>
        <taxon>Sulfurimonas</taxon>
    </lineage>
</organism>
<reference key="1">
    <citation type="journal article" date="2008" name="Appl. Environ. Microbiol.">
        <title>Genome of the epsilonproteobacterial chemolithoautotroph Sulfurimonas denitrificans.</title>
        <authorList>
            <person name="Sievert S.M."/>
            <person name="Scott K.M."/>
            <person name="Klotz M.G."/>
            <person name="Chain P.S.G."/>
            <person name="Hauser L.J."/>
            <person name="Hemp J."/>
            <person name="Huegler M."/>
            <person name="Land M."/>
            <person name="Lapidus A."/>
            <person name="Larimer F.W."/>
            <person name="Lucas S."/>
            <person name="Malfatti S.A."/>
            <person name="Meyer F."/>
            <person name="Paulsen I.T."/>
            <person name="Ren Q."/>
            <person name="Simon J."/>
            <person name="Bailey K."/>
            <person name="Diaz E."/>
            <person name="Fitzpatrick K.A."/>
            <person name="Glover B."/>
            <person name="Gwatney N."/>
            <person name="Korajkic A."/>
            <person name="Long A."/>
            <person name="Mobberley J.M."/>
            <person name="Pantry S.N."/>
            <person name="Pazder G."/>
            <person name="Peterson S."/>
            <person name="Quintanilla J.D."/>
            <person name="Sprinkle R."/>
            <person name="Stephens J."/>
            <person name="Thomas P."/>
            <person name="Vaughn R."/>
            <person name="Weber M.J."/>
            <person name="Wooten L.L."/>
        </authorList>
    </citation>
    <scope>NUCLEOTIDE SEQUENCE [LARGE SCALE GENOMIC DNA]</scope>
    <source>
        <strain>ATCC 33889 / DSM 1251</strain>
    </source>
</reference>
<name>RS6_SULDN</name>
<keyword id="KW-1185">Reference proteome</keyword>
<keyword id="KW-0687">Ribonucleoprotein</keyword>
<keyword id="KW-0689">Ribosomal protein</keyword>
<keyword id="KW-0694">RNA-binding</keyword>
<keyword id="KW-0699">rRNA-binding</keyword>
<comment type="function">
    <text evidence="1">Binds together with bS18 to 16S ribosomal RNA.</text>
</comment>
<comment type="similarity">
    <text evidence="1">Belongs to the bacterial ribosomal protein bS6 family.</text>
</comment>
<gene>
    <name evidence="1" type="primary">rpsF</name>
    <name type="ordered locus">Suden_1660</name>
</gene>
<evidence type="ECO:0000255" key="1">
    <source>
        <dbReference type="HAMAP-Rule" id="MF_00360"/>
    </source>
</evidence>
<evidence type="ECO:0000305" key="2"/>
<proteinExistence type="inferred from homology"/>
<sequence length="137" mass="15588">MRNYENLVIVKPTLTAEEIQANISAIEEIITSNGGEIAARDAMGMRKLAYPLGKNERGYFHVIYYSVDPSAISEIERRFRINEELLRFVTIKYDTNREVTAWNQLVQKAQKKATQPAGEAKVEEVVIPAALEEDEEE</sequence>
<accession>Q30PZ4</accession>
<feature type="chain" id="PRO_0000229588" description="Small ribosomal subunit protein bS6">
    <location>
        <begin position="1"/>
        <end position="137"/>
    </location>
</feature>
<dbReference type="EMBL" id="CP000153">
    <property type="protein sequence ID" value="ABB44937.1"/>
    <property type="molecule type" value="Genomic_DNA"/>
</dbReference>
<dbReference type="RefSeq" id="WP_011373278.1">
    <property type="nucleotide sequence ID" value="NC_007575.1"/>
</dbReference>
<dbReference type="SMR" id="Q30PZ4"/>
<dbReference type="STRING" id="326298.Suden_1660"/>
<dbReference type="KEGG" id="tdn:Suden_1660"/>
<dbReference type="eggNOG" id="COG0360">
    <property type="taxonomic scope" value="Bacteria"/>
</dbReference>
<dbReference type="HOGENOM" id="CLU_113441_4_1_7"/>
<dbReference type="OrthoDB" id="9812702at2"/>
<dbReference type="Proteomes" id="UP000002714">
    <property type="component" value="Chromosome"/>
</dbReference>
<dbReference type="GO" id="GO:0022627">
    <property type="term" value="C:cytosolic small ribosomal subunit"/>
    <property type="evidence" value="ECO:0007669"/>
    <property type="project" value="TreeGrafter"/>
</dbReference>
<dbReference type="GO" id="GO:0070181">
    <property type="term" value="F:small ribosomal subunit rRNA binding"/>
    <property type="evidence" value="ECO:0007669"/>
    <property type="project" value="TreeGrafter"/>
</dbReference>
<dbReference type="GO" id="GO:0003735">
    <property type="term" value="F:structural constituent of ribosome"/>
    <property type="evidence" value="ECO:0007669"/>
    <property type="project" value="InterPro"/>
</dbReference>
<dbReference type="GO" id="GO:0006412">
    <property type="term" value="P:translation"/>
    <property type="evidence" value="ECO:0007669"/>
    <property type="project" value="UniProtKB-UniRule"/>
</dbReference>
<dbReference type="CDD" id="cd00473">
    <property type="entry name" value="bS6"/>
    <property type="match status" value="1"/>
</dbReference>
<dbReference type="Gene3D" id="3.30.70.60">
    <property type="match status" value="1"/>
</dbReference>
<dbReference type="HAMAP" id="MF_00360">
    <property type="entry name" value="Ribosomal_bS6"/>
    <property type="match status" value="1"/>
</dbReference>
<dbReference type="InterPro" id="IPR000529">
    <property type="entry name" value="Ribosomal_bS6"/>
</dbReference>
<dbReference type="InterPro" id="IPR035980">
    <property type="entry name" value="Ribosomal_bS6_sf"/>
</dbReference>
<dbReference type="InterPro" id="IPR020814">
    <property type="entry name" value="Ribosomal_S6_plastid/chlpt"/>
</dbReference>
<dbReference type="InterPro" id="IPR014717">
    <property type="entry name" value="Transl_elong_EF1B/ribsomal_bS6"/>
</dbReference>
<dbReference type="NCBIfam" id="TIGR00166">
    <property type="entry name" value="S6"/>
    <property type="match status" value="1"/>
</dbReference>
<dbReference type="PANTHER" id="PTHR21011">
    <property type="entry name" value="MITOCHONDRIAL 28S RIBOSOMAL PROTEIN S6"/>
    <property type="match status" value="1"/>
</dbReference>
<dbReference type="PANTHER" id="PTHR21011:SF1">
    <property type="entry name" value="SMALL RIBOSOMAL SUBUNIT PROTEIN BS6M"/>
    <property type="match status" value="1"/>
</dbReference>
<dbReference type="Pfam" id="PF01250">
    <property type="entry name" value="Ribosomal_S6"/>
    <property type="match status" value="1"/>
</dbReference>
<dbReference type="SUPFAM" id="SSF54995">
    <property type="entry name" value="Ribosomal protein S6"/>
    <property type="match status" value="1"/>
</dbReference>